<sequence length="202" mass="22365">MKALTTRQQEVYDLVRDHLAQTGMPPTRAEIAQRLGFRSPNAAEEHLKALARKGVIEIVSGASRGIRLLMEEEEGLPLIGRVAAGEPLLAQQHIEGHYKVDPSLFKPGADFLLRVNGMSMRDIGILDGDLLAVHKTQDVRNGQVVVARIDDEVTVKRLKKQGNIVHLLPENSEFQPIVVDLREQSFTIEGLAVGVIRNGDWI</sequence>
<comment type="function">
    <text evidence="1">Represses a number of genes involved in the response to DNA damage (SOS response), including recA and lexA. Binds to the 16 bp palindromic sequence 5'-CTGTATATATATACAG-3'. In the presence of single-stranded DNA, RecA interacts with LexA causing an autocatalytic cleavage which disrupts the DNA-binding part of LexA, leading to derepression of the SOS regulon and eventually DNA repair.</text>
</comment>
<comment type="catalytic activity">
    <reaction evidence="1">
        <text>Hydrolysis of Ala-|-Gly bond in repressor LexA.</text>
        <dbReference type="EC" id="3.4.21.88"/>
    </reaction>
</comment>
<comment type="subunit">
    <text evidence="1">Homodimer.</text>
</comment>
<comment type="similarity">
    <text evidence="1">Belongs to the peptidase S24 family.</text>
</comment>
<name>LEXA_YERPB</name>
<keyword id="KW-0068">Autocatalytic cleavage</keyword>
<keyword id="KW-0227">DNA damage</keyword>
<keyword id="KW-0234">DNA repair</keyword>
<keyword id="KW-0235">DNA replication</keyword>
<keyword id="KW-0238">DNA-binding</keyword>
<keyword id="KW-0378">Hydrolase</keyword>
<keyword id="KW-0678">Repressor</keyword>
<keyword id="KW-0742">SOS response</keyword>
<keyword id="KW-0804">Transcription</keyword>
<keyword id="KW-0805">Transcription regulation</keyword>
<feature type="chain" id="PRO_1000089606" description="LexA repressor">
    <location>
        <begin position="1"/>
        <end position="202"/>
    </location>
</feature>
<feature type="DNA-binding region" description="H-T-H motif" evidence="1">
    <location>
        <begin position="28"/>
        <end position="48"/>
    </location>
</feature>
<feature type="active site" description="For autocatalytic cleavage activity" evidence="1">
    <location>
        <position position="119"/>
    </location>
</feature>
<feature type="active site" description="For autocatalytic cleavage activity" evidence="1">
    <location>
        <position position="156"/>
    </location>
</feature>
<feature type="site" description="Cleavage; by autolysis" evidence="1">
    <location>
        <begin position="84"/>
        <end position="85"/>
    </location>
</feature>
<protein>
    <recommendedName>
        <fullName evidence="1">LexA repressor</fullName>
        <ecNumber evidence="1">3.4.21.88</ecNumber>
    </recommendedName>
</protein>
<organism>
    <name type="scientific">Yersinia pseudotuberculosis serotype IB (strain PB1/+)</name>
    <dbReference type="NCBI Taxonomy" id="502801"/>
    <lineage>
        <taxon>Bacteria</taxon>
        <taxon>Pseudomonadati</taxon>
        <taxon>Pseudomonadota</taxon>
        <taxon>Gammaproteobacteria</taxon>
        <taxon>Enterobacterales</taxon>
        <taxon>Yersiniaceae</taxon>
        <taxon>Yersinia</taxon>
    </lineage>
</organism>
<reference key="1">
    <citation type="submission" date="2008-04" db="EMBL/GenBank/DDBJ databases">
        <title>Complete sequence of Yersinia pseudotuberculosis PB1/+.</title>
        <authorList>
            <person name="Copeland A."/>
            <person name="Lucas S."/>
            <person name="Lapidus A."/>
            <person name="Glavina del Rio T."/>
            <person name="Dalin E."/>
            <person name="Tice H."/>
            <person name="Bruce D."/>
            <person name="Goodwin L."/>
            <person name="Pitluck S."/>
            <person name="Munk A.C."/>
            <person name="Brettin T."/>
            <person name="Detter J.C."/>
            <person name="Han C."/>
            <person name="Tapia R."/>
            <person name="Schmutz J."/>
            <person name="Larimer F."/>
            <person name="Land M."/>
            <person name="Hauser L."/>
            <person name="Challacombe J.F."/>
            <person name="Green L."/>
            <person name="Lindler L.E."/>
            <person name="Nikolich M.P."/>
            <person name="Richardson P."/>
        </authorList>
    </citation>
    <scope>NUCLEOTIDE SEQUENCE [LARGE SCALE GENOMIC DNA]</scope>
    <source>
        <strain>PB1/+</strain>
    </source>
</reference>
<accession>B2K1U7</accession>
<gene>
    <name evidence="1" type="primary">lexA</name>
    <name type="ordered locus">YPTS_0393</name>
</gene>
<proteinExistence type="inferred from homology"/>
<evidence type="ECO:0000255" key="1">
    <source>
        <dbReference type="HAMAP-Rule" id="MF_00015"/>
    </source>
</evidence>
<dbReference type="EC" id="3.4.21.88" evidence="1"/>
<dbReference type="EMBL" id="CP001048">
    <property type="protein sequence ID" value="ACC87382.1"/>
    <property type="molecule type" value="Genomic_DNA"/>
</dbReference>
<dbReference type="RefSeq" id="WP_002209090.1">
    <property type="nucleotide sequence ID" value="NZ_CP009780.1"/>
</dbReference>
<dbReference type="SMR" id="B2K1U7"/>
<dbReference type="MEROPS" id="S24.001"/>
<dbReference type="GeneID" id="57974290"/>
<dbReference type="KEGG" id="ypb:YPTS_0393"/>
<dbReference type="PATRIC" id="fig|502801.10.peg.4071"/>
<dbReference type="GO" id="GO:0003677">
    <property type="term" value="F:DNA binding"/>
    <property type="evidence" value="ECO:0007669"/>
    <property type="project" value="UniProtKB-UniRule"/>
</dbReference>
<dbReference type="GO" id="GO:0004252">
    <property type="term" value="F:serine-type endopeptidase activity"/>
    <property type="evidence" value="ECO:0007669"/>
    <property type="project" value="UniProtKB-UniRule"/>
</dbReference>
<dbReference type="GO" id="GO:0006281">
    <property type="term" value="P:DNA repair"/>
    <property type="evidence" value="ECO:0007669"/>
    <property type="project" value="UniProtKB-UniRule"/>
</dbReference>
<dbReference type="GO" id="GO:0006260">
    <property type="term" value="P:DNA replication"/>
    <property type="evidence" value="ECO:0007669"/>
    <property type="project" value="UniProtKB-UniRule"/>
</dbReference>
<dbReference type="GO" id="GO:0045892">
    <property type="term" value="P:negative regulation of DNA-templated transcription"/>
    <property type="evidence" value="ECO:0007669"/>
    <property type="project" value="UniProtKB-UniRule"/>
</dbReference>
<dbReference type="GO" id="GO:0006508">
    <property type="term" value="P:proteolysis"/>
    <property type="evidence" value="ECO:0007669"/>
    <property type="project" value="InterPro"/>
</dbReference>
<dbReference type="GO" id="GO:0009432">
    <property type="term" value="P:SOS response"/>
    <property type="evidence" value="ECO:0007669"/>
    <property type="project" value="UniProtKB-UniRule"/>
</dbReference>
<dbReference type="CDD" id="cd06529">
    <property type="entry name" value="S24_LexA-like"/>
    <property type="match status" value="1"/>
</dbReference>
<dbReference type="FunFam" id="1.10.10.10:FF:000009">
    <property type="entry name" value="LexA repressor"/>
    <property type="match status" value="1"/>
</dbReference>
<dbReference type="FunFam" id="2.10.109.10:FF:000001">
    <property type="entry name" value="LexA repressor"/>
    <property type="match status" value="1"/>
</dbReference>
<dbReference type="Gene3D" id="2.10.109.10">
    <property type="entry name" value="Umud Fragment, subunit A"/>
    <property type="match status" value="1"/>
</dbReference>
<dbReference type="Gene3D" id="1.10.10.10">
    <property type="entry name" value="Winged helix-like DNA-binding domain superfamily/Winged helix DNA-binding domain"/>
    <property type="match status" value="1"/>
</dbReference>
<dbReference type="HAMAP" id="MF_00015">
    <property type="entry name" value="LexA"/>
    <property type="match status" value="1"/>
</dbReference>
<dbReference type="InterPro" id="IPR006200">
    <property type="entry name" value="LexA"/>
</dbReference>
<dbReference type="InterPro" id="IPR039418">
    <property type="entry name" value="LexA-like"/>
</dbReference>
<dbReference type="InterPro" id="IPR036286">
    <property type="entry name" value="LexA/Signal_pep-like_sf"/>
</dbReference>
<dbReference type="InterPro" id="IPR006199">
    <property type="entry name" value="LexA_DNA-bd_dom"/>
</dbReference>
<dbReference type="InterPro" id="IPR050077">
    <property type="entry name" value="LexA_repressor"/>
</dbReference>
<dbReference type="InterPro" id="IPR006197">
    <property type="entry name" value="Peptidase_S24_LexA"/>
</dbReference>
<dbReference type="InterPro" id="IPR015927">
    <property type="entry name" value="Peptidase_S24_S26A/B/C"/>
</dbReference>
<dbReference type="InterPro" id="IPR036388">
    <property type="entry name" value="WH-like_DNA-bd_sf"/>
</dbReference>
<dbReference type="InterPro" id="IPR036390">
    <property type="entry name" value="WH_DNA-bd_sf"/>
</dbReference>
<dbReference type="NCBIfam" id="TIGR00498">
    <property type="entry name" value="lexA"/>
    <property type="match status" value="1"/>
</dbReference>
<dbReference type="PANTHER" id="PTHR33516">
    <property type="entry name" value="LEXA REPRESSOR"/>
    <property type="match status" value="1"/>
</dbReference>
<dbReference type="PANTHER" id="PTHR33516:SF2">
    <property type="entry name" value="LEXA REPRESSOR-RELATED"/>
    <property type="match status" value="1"/>
</dbReference>
<dbReference type="Pfam" id="PF01726">
    <property type="entry name" value="LexA_DNA_bind"/>
    <property type="match status" value="1"/>
</dbReference>
<dbReference type="Pfam" id="PF00717">
    <property type="entry name" value="Peptidase_S24"/>
    <property type="match status" value="1"/>
</dbReference>
<dbReference type="PRINTS" id="PR00726">
    <property type="entry name" value="LEXASERPTASE"/>
</dbReference>
<dbReference type="SUPFAM" id="SSF51306">
    <property type="entry name" value="LexA/Signal peptidase"/>
    <property type="match status" value="1"/>
</dbReference>
<dbReference type="SUPFAM" id="SSF46785">
    <property type="entry name" value="Winged helix' DNA-binding domain"/>
    <property type="match status" value="1"/>
</dbReference>